<accession>O08838</accession>
<comment type="function">
    <text evidence="1">May participate in mechanisms of regulated exocytosis in synapses and certain endocrine cell types. May control the properties of the membrane associated cytoskeleton (By similarity).</text>
</comment>
<comment type="subunit">
    <text evidence="2 8 9 10 11 12">Heterodimer with BIN1 (PubMed:9341169). Binds SH3GLB1 (By similarity). Interacts with REPS1 and SGIP1 (By similarity). Binds AP2A2 (PubMed:10380931, PubMed:10430869). Interacts with AP2B1 (PubMed:16516836, PubMed:16903783). Interacts with DNM1 and SYNJ1 (PubMed:9341169).</text>
</comment>
<comment type="interaction">
    <interactant intactId="EBI-80080">
        <id>O08838</id>
    </interactant>
    <interactant intactId="EBI-80095">
        <id>O08839</id>
        <label>Bin1</label>
    </interactant>
    <organismsDiffer>false</organismsDiffer>
    <experiments>2</experiments>
</comment>
<comment type="interaction">
    <interactant intactId="EBI-80080">
        <id>O08838</id>
    </interactant>
    <interactant intactId="EBI-80070">
        <id>P21575</id>
        <label>Dnm1</label>
    </interactant>
    <organismsDiffer>false</organismsDiffer>
    <experiments>3</experiments>
</comment>
<comment type="interaction">
    <interactant intactId="EBI-80080">
        <id>O08838</id>
    </interactant>
    <interactant intactId="EBI-349613">
        <id>P39052</id>
        <label>Dnm2</label>
    </interactant>
    <organismsDiffer>false</organismsDiffer>
    <experiments>2</experiments>
</comment>
<comment type="interaction">
    <interactant intactId="EBI-80080">
        <id>O08838</id>
    </interactant>
    <interactant intactId="EBI-7592476">
        <id>Q9CR95</id>
        <label>Necap1</label>
    </interactant>
    <organismsDiffer>true</organismsDiffer>
    <experiments>8</experiments>
</comment>
<comment type="interaction">
    <interactant intactId="EBI-80080">
        <id>O08838</id>
    </interactant>
    <interactant intactId="EBI-368166">
        <id>O43295</id>
        <label>SRGAP3</label>
    </interactant>
    <organismsDiffer>true</organismsDiffer>
    <experiments>3</experiments>
</comment>
<comment type="subcellular location">
    <subcellularLocation>
        <location evidence="1">Cytoplasmic vesicle</location>
        <location evidence="1">Secretory vesicle</location>
        <location evidence="1">Synaptic vesicle membrane</location>
        <topology evidence="1">Peripheral membrane protein</topology>
        <orientation evidence="1">Cytoplasmic side</orientation>
    </subcellularLocation>
    <subcellularLocation>
        <location evidence="1">Cytoplasm</location>
        <location evidence="1">Cytoskeleton</location>
    </subcellularLocation>
</comment>
<sequence length="683" mass="74878">MADIKTGIFAKNVQKRLNRAQEKVLQKLGKADETKDEQFEEYVQNFKRQEAEGTRLQRELRGYLAAIKGMQEASMKLTESLHEVYEPDWYGREDVKMVGEKCDVLWEDFHQKLVDGSLLTLDTYLGQFPDIKNRIAKRSRKLVDYDSARHHLEALQSSKRKDESRISKAEEEFQKAQKVFEEFNVDLQEELPSLWSRRVGFYVNTFKNVSSLEAKFHKEIAVLCHKLYEVMTKLGDQHADKAFSIQGAPSDSGPLRIAKTPSPPEEASPLPSPTASPNHTLAPASPAPVRPRSPSQTRKGPPVPPLPKVTPTKELQQENIINFFEDNFVPEINVTTPSQNEVLEVKKEETLLDLDFDPFKPDVTPAGSAAATHSPMSQTLPWDLWTTSTDLVQPASGGSFNDFTQPQDTSLFTMQTDQNMAETEQALPTEPQAEEPPTTAAAPTAGLDLGLEMEEPKEEAAIPPGTDAGETVGTEGSTGEEAEAEKAALPAGEGESPEGAKIDVESTELASSESPQAAELEAGAPQEKVIPSVVIEPASNHEGEEHQETTTGTETREATEDVAPQGPAGEKQELATEPTPLDSQAATPAPAGAVDASLSAGDAAQELPPGFLYKVETLHDFEAANSDELTLQRGDVVLVVPSDSEADQDAGWLVGVKESDWLQYRDLATYKGLFPENFTRHLE</sequence>
<protein>
    <recommendedName>
        <fullName>Amphiphysin</fullName>
    </recommendedName>
</protein>
<proteinExistence type="evidence at protein level"/>
<evidence type="ECO:0000250" key="1"/>
<evidence type="ECO:0000250" key="2">
    <source>
        <dbReference type="UniProtKB" id="P49418"/>
    </source>
</evidence>
<evidence type="ECO:0000250" key="3">
    <source>
        <dbReference type="UniProtKB" id="Q7TQF7"/>
    </source>
</evidence>
<evidence type="ECO:0000255" key="4"/>
<evidence type="ECO:0000255" key="5">
    <source>
        <dbReference type="PROSITE-ProRule" id="PRU00192"/>
    </source>
</evidence>
<evidence type="ECO:0000255" key="6">
    <source>
        <dbReference type="PROSITE-ProRule" id="PRU00361"/>
    </source>
</evidence>
<evidence type="ECO:0000256" key="7">
    <source>
        <dbReference type="SAM" id="MobiDB-lite"/>
    </source>
</evidence>
<evidence type="ECO:0000269" key="8">
    <source>
    </source>
</evidence>
<evidence type="ECO:0000269" key="9">
    <source>
    </source>
</evidence>
<evidence type="ECO:0000269" key="10">
    <source>
    </source>
</evidence>
<evidence type="ECO:0000269" key="11">
    <source>
    </source>
</evidence>
<evidence type="ECO:0000269" key="12">
    <source>
    </source>
</evidence>
<reference key="1">
    <citation type="journal article" date="1997" name="Mol. Biol. Cell">
        <title>Amphiphysin heterodimers: potential role in clathrin-mediated endocytosis.</title>
        <authorList>
            <person name="Wigge P."/>
            <person name="Koehler K."/>
            <person name="Vallis Y."/>
            <person name="Doyle C."/>
            <person name="Owen D."/>
            <person name="Hunt S.P."/>
            <person name="McMahon H.T."/>
        </authorList>
    </citation>
    <scope>NUCLEOTIDE SEQUENCE [MRNA]</scope>
    <source>
        <strain>Sprague-Dawley</strain>
        <tissue>Brain cortex</tissue>
    </source>
</reference>
<reference key="2">
    <citation type="submission" date="2007-04" db="UniProtKB">
        <authorList>
            <person name="Lubec G."/>
            <person name="Chen W.-Q."/>
        </authorList>
    </citation>
    <scope>PROTEIN SEQUENCE OF 198-207; 242-256 AND 615-633</scope>
    <scope>IDENTIFICATION BY MASS SPECTROMETRY</scope>
    <source>
        <strain>Sprague-Dawley</strain>
        <tissue>Hippocampus</tissue>
    </source>
</reference>
<reference key="3">
    <citation type="journal article" date="1997" name="J. Biol. Chem.">
        <title>Synaptojanin forms two separate complexes in the nerve terminal. Interactions with endophilin and amphiphysin.</title>
        <authorList>
            <person name="Micheva K.D."/>
            <person name="Kay B.K."/>
            <person name="McPherson P.S."/>
        </authorList>
    </citation>
    <scope>INTERACTION WITH BIN1; DNM1 AND SYNJ1</scope>
</reference>
<reference key="4">
    <citation type="journal article" date="1999" name="Cell">
        <title>A structural explanation for the binding of multiple ligands by the alpha-adaptin appendage domain.</title>
        <authorList>
            <person name="Owen D.J."/>
            <person name="Vallis Y."/>
            <person name="Noble M.E.M."/>
            <person name="Hunter J.B."/>
            <person name="Dafforn T.R."/>
            <person name="Evans P.R."/>
            <person name="McMahon H.T."/>
        </authorList>
    </citation>
    <scope>INTERACTION WITH AP2A2</scope>
</reference>
<reference key="5">
    <citation type="journal article" date="1999" name="Proc. Natl. Acad. Sci. U.S.A.">
        <title>Crystal structure of the alpha appendage of AP-2 reveals a recruitment platform for clathrin-coat assembly.</title>
        <authorList>
            <person name="Traub L.M."/>
            <person name="Downs M.A."/>
            <person name="Westrich J.L."/>
            <person name="Fremont D.H."/>
        </authorList>
    </citation>
    <scope>INTERACTION WITH AP2A2</scope>
</reference>
<reference key="6">
    <citation type="journal article" date="2006" name="Dev. Cell">
        <title>Molecular switches involving the AP-2 beta2 appendage regulate endocytic cargo selection and clathrin coat assembly.</title>
        <authorList>
            <person name="Edeling M.A."/>
            <person name="Mishra S.K."/>
            <person name="Keyel P.A."/>
            <person name="Steinhauser A.L."/>
            <person name="Collins B.M."/>
            <person name="Roth R."/>
            <person name="Heuser J.E."/>
            <person name="Owen D.J."/>
            <person name="Traub L.M."/>
        </authorList>
    </citation>
    <scope>INTERACTION WITH AP2B1</scope>
</reference>
<reference key="7">
    <citation type="journal article" date="2006" name="PLoS Biol.">
        <title>Role of the AP2 beta-appendage hub in recruiting partners for clathrin-coated vesicle assembly.</title>
        <authorList>
            <person name="Schmid E.M."/>
            <person name="Ford M.G.J."/>
            <person name="Burtey A."/>
            <person name="Praefcke G.J.K."/>
            <person name="Peak-Chew S.-Y."/>
            <person name="Mills I.G."/>
            <person name="Benmerah A."/>
            <person name="McMahon H.T."/>
        </authorList>
    </citation>
    <scope>INTERACTION WITH AP2B1</scope>
</reference>
<gene>
    <name type="primary">Amph</name>
    <name type="synonym">Amph1</name>
</gene>
<name>AMPH_RAT</name>
<dbReference type="EMBL" id="Y13381">
    <property type="protein sequence ID" value="CAA73808.1"/>
    <property type="molecule type" value="mRNA"/>
</dbReference>
<dbReference type="RefSeq" id="NP_071553.1">
    <property type="nucleotide sequence ID" value="NM_022217.1"/>
</dbReference>
<dbReference type="PDB" id="2VJ0">
    <property type="method" value="X-ray"/>
    <property type="resolution" value="1.60 A"/>
    <property type="chains" value="Q=324-330"/>
</dbReference>
<dbReference type="PDB" id="5M5T">
    <property type="method" value="X-ray"/>
    <property type="resolution" value="1.70 A"/>
    <property type="chains" value="E/F/G/H/I/J=349-356"/>
</dbReference>
<dbReference type="PDBsum" id="2VJ0"/>
<dbReference type="PDBsum" id="5M5T"/>
<dbReference type="SMR" id="O08838"/>
<dbReference type="BioGRID" id="248889">
    <property type="interactions" value="22"/>
</dbReference>
<dbReference type="CORUM" id="O08838"/>
<dbReference type="DIP" id="DIP-30977N"/>
<dbReference type="ELM" id="O08838"/>
<dbReference type="FunCoup" id="O08838">
    <property type="interactions" value="2148"/>
</dbReference>
<dbReference type="IntAct" id="O08838">
    <property type="interactions" value="9"/>
</dbReference>
<dbReference type="MINT" id="O08838"/>
<dbReference type="STRING" id="10116.ENSRNOP00000017102"/>
<dbReference type="GlyGen" id="O08838">
    <property type="glycosylation" value="5 sites, 1 O-linked glycan (1 site)"/>
</dbReference>
<dbReference type="iPTMnet" id="O08838"/>
<dbReference type="PhosphoSitePlus" id="O08838"/>
<dbReference type="jPOST" id="O08838"/>
<dbReference type="PaxDb" id="10116-ENSRNOP00000017102"/>
<dbReference type="GeneID" id="60668"/>
<dbReference type="KEGG" id="rno:60668"/>
<dbReference type="UCSC" id="RGD:620274">
    <property type="organism name" value="rat"/>
</dbReference>
<dbReference type="AGR" id="RGD:620274"/>
<dbReference type="CTD" id="273"/>
<dbReference type="RGD" id="620274">
    <property type="gene designation" value="Amph"/>
</dbReference>
<dbReference type="eggNOG" id="KOG3771">
    <property type="taxonomic scope" value="Eukaryota"/>
</dbReference>
<dbReference type="InParanoid" id="O08838"/>
<dbReference type="PhylomeDB" id="O08838"/>
<dbReference type="Reactome" id="R-RNO-8856828">
    <property type="pathway name" value="Clathrin-mediated endocytosis"/>
</dbReference>
<dbReference type="EvolutionaryTrace" id="O08838"/>
<dbReference type="PRO" id="PR:O08838"/>
<dbReference type="Proteomes" id="UP000002494">
    <property type="component" value="Unplaced"/>
</dbReference>
<dbReference type="GO" id="GO:0043679">
    <property type="term" value="C:axon terminus"/>
    <property type="evidence" value="ECO:0000314"/>
    <property type="project" value="RGD"/>
</dbReference>
<dbReference type="GO" id="GO:0005856">
    <property type="term" value="C:cytoskeleton"/>
    <property type="evidence" value="ECO:0007669"/>
    <property type="project" value="UniProtKB-SubCell"/>
</dbReference>
<dbReference type="GO" id="GO:0098850">
    <property type="term" value="C:extrinsic component of synaptic vesicle membrane"/>
    <property type="evidence" value="ECO:0000314"/>
    <property type="project" value="SynGO"/>
</dbReference>
<dbReference type="GO" id="GO:0098978">
    <property type="term" value="C:glutamatergic synapse"/>
    <property type="evidence" value="ECO:0000266"/>
    <property type="project" value="RGD"/>
</dbReference>
<dbReference type="GO" id="GO:0031256">
    <property type="term" value="C:leading edge membrane"/>
    <property type="evidence" value="ECO:0000266"/>
    <property type="project" value="RGD"/>
</dbReference>
<dbReference type="GO" id="GO:0098684">
    <property type="term" value="C:photoreceptor ribbon synapse"/>
    <property type="evidence" value="ECO:0000266"/>
    <property type="project" value="RGD"/>
</dbReference>
<dbReference type="GO" id="GO:0005886">
    <property type="term" value="C:plasma membrane"/>
    <property type="evidence" value="ECO:0000318"/>
    <property type="project" value="GO_Central"/>
</dbReference>
<dbReference type="GO" id="GO:0098843">
    <property type="term" value="C:postsynaptic endocytic zone"/>
    <property type="evidence" value="ECO:0000314"/>
    <property type="project" value="SynGO"/>
</dbReference>
<dbReference type="GO" id="GO:0098793">
    <property type="term" value="C:presynapse"/>
    <property type="evidence" value="ECO:0000266"/>
    <property type="project" value="RGD"/>
</dbReference>
<dbReference type="GO" id="GO:0098833">
    <property type="term" value="C:presynaptic endocytic zone"/>
    <property type="evidence" value="ECO:0000266"/>
    <property type="project" value="RGD"/>
</dbReference>
<dbReference type="GO" id="GO:0008021">
    <property type="term" value="C:synaptic vesicle"/>
    <property type="evidence" value="ECO:0000266"/>
    <property type="project" value="RGD"/>
</dbReference>
<dbReference type="GO" id="GO:0043195">
    <property type="term" value="C:terminal bouton"/>
    <property type="evidence" value="ECO:0007005"/>
    <property type="project" value="ParkinsonsUK-UCL"/>
</dbReference>
<dbReference type="GO" id="GO:0019902">
    <property type="term" value="F:phosphatase binding"/>
    <property type="evidence" value="ECO:0000353"/>
    <property type="project" value="RGD"/>
</dbReference>
<dbReference type="GO" id="GO:0005543">
    <property type="term" value="F:phospholipid binding"/>
    <property type="evidence" value="ECO:0000266"/>
    <property type="project" value="RGD"/>
</dbReference>
<dbReference type="GO" id="GO:0044877">
    <property type="term" value="F:protein-containing complex binding"/>
    <property type="evidence" value="ECO:0000353"/>
    <property type="project" value="RGD"/>
</dbReference>
<dbReference type="GO" id="GO:0007612">
    <property type="term" value="P:learning"/>
    <property type="evidence" value="ECO:0000266"/>
    <property type="project" value="RGD"/>
</dbReference>
<dbReference type="GO" id="GO:0045807">
    <property type="term" value="P:positive regulation of endocytosis"/>
    <property type="evidence" value="ECO:0000315"/>
    <property type="project" value="RGD"/>
</dbReference>
<dbReference type="GO" id="GO:0048488">
    <property type="term" value="P:synaptic vesicle endocytosis"/>
    <property type="evidence" value="ECO:0000266"/>
    <property type="project" value="RGD"/>
</dbReference>
<dbReference type="CDD" id="cd07611">
    <property type="entry name" value="BAR_Amphiphysin_I_II"/>
    <property type="match status" value="1"/>
</dbReference>
<dbReference type="CDD" id="cd12140">
    <property type="entry name" value="SH3_Amphiphysin_I"/>
    <property type="match status" value="1"/>
</dbReference>
<dbReference type="FunFam" id="2.30.30.40:FF:000103">
    <property type="entry name" value="Amphiphysin"/>
    <property type="match status" value="1"/>
</dbReference>
<dbReference type="FunFam" id="1.20.1270.60:FF:000013">
    <property type="entry name" value="Amphiphysin isoform 2"/>
    <property type="match status" value="1"/>
</dbReference>
<dbReference type="Gene3D" id="1.20.1270.60">
    <property type="entry name" value="Arfaptin homology (AH) domain/BAR domain"/>
    <property type="match status" value="1"/>
</dbReference>
<dbReference type="Gene3D" id="2.30.30.40">
    <property type="entry name" value="SH3 Domains"/>
    <property type="match status" value="1"/>
</dbReference>
<dbReference type="IDEAL" id="IID50298"/>
<dbReference type="InterPro" id="IPR027267">
    <property type="entry name" value="AH/BAR_dom_sf"/>
</dbReference>
<dbReference type="InterPro" id="IPR003005">
    <property type="entry name" value="Amphiphysin"/>
</dbReference>
<dbReference type="InterPro" id="IPR003017">
    <property type="entry name" value="Amphiphysin_1"/>
</dbReference>
<dbReference type="InterPro" id="IPR035470">
    <property type="entry name" value="Amphiphysin_I_SH3"/>
</dbReference>
<dbReference type="InterPro" id="IPR004148">
    <property type="entry name" value="BAR_dom"/>
</dbReference>
<dbReference type="InterPro" id="IPR036028">
    <property type="entry name" value="SH3-like_dom_sf"/>
</dbReference>
<dbReference type="InterPro" id="IPR001452">
    <property type="entry name" value="SH3_domain"/>
</dbReference>
<dbReference type="PANTHER" id="PTHR46514">
    <property type="entry name" value="AMPHIPHYSIN"/>
    <property type="match status" value="1"/>
</dbReference>
<dbReference type="PANTHER" id="PTHR46514:SF2">
    <property type="entry name" value="AMPHIPHYSIN"/>
    <property type="match status" value="1"/>
</dbReference>
<dbReference type="Pfam" id="PF03114">
    <property type="entry name" value="BAR"/>
    <property type="match status" value="1"/>
</dbReference>
<dbReference type="PRINTS" id="PR01251">
    <property type="entry name" value="AMPHIPHYSIN"/>
</dbReference>
<dbReference type="PRINTS" id="PR01252">
    <property type="entry name" value="AMPHIPHYSIN1"/>
</dbReference>
<dbReference type="PRINTS" id="PR00452">
    <property type="entry name" value="SH3DOMAIN"/>
</dbReference>
<dbReference type="SMART" id="SM00721">
    <property type="entry name" value="BAR"/>
    <property type="match status" value="1"/>
</dbReference>
<dbReference type="SMART" id="SM00326">
    <property type="entry name" value="SH3"/>
    <property type="match status" value="1"/>
</dbReference>
<dbReference type="SUPFAM" id="SSF103657">
    <property type="entry name" value="BAR/IMD domain-like"/>
    <property type="match status" value="1"/>
</dbReference>
<dbReference type="SUPFAM" id="SSF50044">
    <property type="entry name" value="SH3-domain"/>
    <property type="match status" value="1"/>
</dbReference>
<dbReference type="PROSITE" id="PS51021">
    <property type="entry name" value="BAR"/>
    <property type="match status" value="1"/>
</dbReference>
<dbReference type="PROSITE" id="PS50002">
    <property type="entry name" value="SH3"/>
    <property type="match status" value="1"/>
</dbReference>
<keyword id="KW-0002">3D-structure</keyword>
<keyword id="KW-0175">Coiled coil</keyword>
<keyword id="KW-0963">Cytoplasm</keyword>
<keyword id="KW-0968">Cytoplasmic vesicle</keyword>
<keyword id="KW-0206">Cytoskeleton</keyword>
<keyword id="KW-0903">Direct protein sequencing</keyword>
<keyword id="KW-0472">Membrane</keyword>
<keyword id="KW-0597">Phosphoprotein</keyword>
<keyword id="KW-1185">Reference proteome</keyword>
<keyword id="KW-0728">SH3 domain</keyword>
<keyword id="KW-0770">Synapse</keyword>
<feature type="chain" id="PRO_0000192949" description="Amphiphysin">
    <location>
        <begin position="1"/>
        <end position="683"/>
    </location>
</feature>
<feature type="domain" description="BAR" evidence="6">
    <location>
        <begin position="24"/>
        <end position="240"/>
    </location>
</feature>
<feature type="domain" description="SH3" evidence="5">
    <location>
        <begin position="610"/>
        <end position="683"/>
    </location>
</feature>
<feature type="region of interest" description="Disordered" evidence="7">
    <location>
        <begin position="244"/>
        <end position="311"/>
    </location>
</feature>
<feature type="region of interest" description="Disordered" evidence="7">
    <location>
        <begin position="421"/>
        <end position="443"/>
    </location>
</feature>
<feature type="region of interest" description="Disordered" evidence="7">
    <location>
        <begin position="455"/>
        <end position="599"/>
    </location>
</feature>
<feature type="coiled-coil region" evidence="4">
    <location>
        <begin position="10"/>
        <end position="83"/>
    </location>
</feature>
<feature type="coiled-coil region" evidence="4">
    <location>
        <begin position="144"/>
        <end position="191"/>
    </location>
</feature>
<feature type="compositionally biased region" description="Pro residues" evidence="7">
    <location>
        <begin position="261"/>
        <end position="274"/>
    </location>
</feature>
<feature type="compositionally biased region" description="Low complexity" evidence="7">
    <location>
        <begin position="424"/>
        <end position="443"/>
    </location>
</feature>
<feature type="compositionally biased region" description="Low complexity" evidence="7">
    <location>
        <begin position="468"/>
        <end position="477"/>
    </location>
</feature>
<feature type="compositionally biased region" description="Basic and acidic residues" evidence="7">
    <location>
        <begin position="539"/>
        <end position="559"/>
    </location>
</feature>
<feature type="compositionally biased region" description="Low complexity" evidence="7">
    <location>
        <begin position="585"/>
        <end position="596"/>
    </location>
</feature>
<feature type="modified residue" description="Phosphoserine" evidence="3">
    <location>
        <position position="252"/>
    </location>
</feature>
<feature type="modified residue" description="Phosphothreonine" evidence="3">
    <location>
        <position position="260"/>
    </location>
</feature>
<feature type="modified residue" description="Phosphoserine" evidence="3">
    <location>
        <position position="262"/>
    </location>
</feature>
<feature type="modified residue" description="Phosphoserine" evidence="3">
    <location>
        <position position="268"/>
    </location>
</feature>
<feature type="modified residue" description="Phosphoserine" evidence="3">
    <location>
        <position position="272"/>
    </location>
</feature>
<feature type="modified residue" description="Phosphoserine" evidence="3">
    <location>
        <position position="276"/>
    </location>
</feature>
<feature type="modified residue" description="Phosphothreonine" evidence="3">
    <location>
        <position position="280"/>
    </location>
</feature>
<feature type="modified residue" description="Phosphoserine" evidence="3">
    <location>
        <position position="496"/>
    </location>
</feature>
<feature type="modified residue" description="Phosphoserine" evidence="3">
    <location>
        <position position="626"/>
    </location>
</feature>
<organism>
    <name type="scientific">Rattus norvegicus</name>
    <name type="common">Rat</name>
    <dbReference type="NCBI Taxonomy" id="10116"/>
    <lineage>
        <taxon>Eukaryota</taxon>
        <taxon>Metazoa</taxon>
        <taxon>Chordata</taxon>
        <taxon>Craniata</taxon>
        <taxon>Vertebrata</taxon>
        <taxon>Euteleostomi</taxon>
        <taxon>Mammalia</taxon>
        <taxon>Eutheria</taxon>
        <taxon>Euarchontoglires</taxon>
        <taxon>Glires</taxon>
        <taxon>Rodentia</taxon>
        <taxon>Myomorpha</taxon>
        <taxon>Muroidea</taxon>
        <taxon>Muridae</taxon>
        <taxon>Murinae</taxon>
        <taxon>Rattus</taxon>
    </lineage>
</organism>